<organism>
    <name type="scientific">Escherichia coli O6:K15:H31 (strain 536 / UPEC)</name>
    <dbReference type="NCBI Taxonomy" id="362663"/>
    <lineage>
        <taxon>Bacteria</taxon>
        <taxon>Pseudomonadati</taxon>
        <taxon>Pseudomonadota</taxon>
        <taxon>Gammaproteobacteria</taxon>
        <taxon>Enterobacterales</taxon>
        <taxon>Enterobacteriaceae</taxon>
        <taxon>Escherichia</taxon>
    </lineage>
</organism>
<comment type="function">
    <text evidence="2">GTP hydrolase that promotes the GTP-dependent binding of aminoacyl-tRNA to the A-site of ribosomes during protein biosynthesis.</text>
</comment>
<comment type="catalytic activity">
    <reaction evidence="2">
        <text>GTP + H2O = GDP + phosphate + H(+)</text>
        <dbReference type="Rhea" id="RHEA:19669"/>
        <dbReference type="ChEBI" id="CHEBI:15377"/>
        <dbReference type="ChEBI" id="CHEBI:15378"/>
        <dbReference type="ChEBI" id="CHEBI:37565"/>
        <dbReference type="ChEBI" id="CHEBI:43474"/>
        <dbReference type="ChEBI" id="CHEBI:58189"/>
        <dbReference type="EC" id="3.6.5.3"/>
    </reaction>
    <physiologicalReaction direction="left-to-right" evidence="2">
        <dbReference type="Rhea" id="RHEA:19670"/>
    </physiologicalReaction>
</comment>
<comment type="subunit">
    <text evidence="2">Monomer.</text>
</comment>
<comment type="subcellular location">
    <subcellularLocation>
        <location evidence="2">Cytoplasm</location>
    </subcellularLocation>
</comment>
<comment type="similarity">
    <text evidence="2">Belongs to the TRAFAC class translation factor GTPase superfamily. Classic translation factor GTPase family. EF-Tu/EF-1A subfamily.</text>
</comment>
<keyword id="KW-0963">Cytoplasm</keyword>
<keyword id="KW-0251">Elongation factor</keyword>
<keyword id="KW-0342">GTP-binding</keyword>
<keyword id="KW-0378">Hydrolase</keyword>
<keyword id="KW-0460">Magnesium</keyword>
<keyword id="KW-0479">Metal-binding</keyword>
<keyword id="KW-0547">Nucleotide-binding</keyword>
<keyword id="KW-0648">Protein biosynthesis</keyword>
<dbReference type="EC" id="3.6.5.3" evidence="2"/>
<dbReference type="EMBL" id="CP000247">
    <property type="protein sequence ID" value="ABG72144.1"/>
    <property type="molecule type" value="Genomic_DNA"/>
</dbReference>
<dbReference type="SMR" id="Q0TA85"/>
<dbReference type="KEGG" id="ecp:ECP_4193"/>
<dbReference type="HOGENOM" id="CLU_007265_0_2_6"/>
<dbReference type="Proteomes" id="UP000009182">
    <property type="component" value="Chromosome"/>
</dbReference>
<dbReference type="GO" id="GO:0005829">
    <property type="term" value="C:cytosol"/>
    <property type="evidence" value="ECO:0007669"/>
    <property type="project" value="TreeGrafter"/>
</dbReference>
<dbReference type="GO" id="GO:0005525">
    <property type="term" value="F:GTP binding"/>
    <property type="evidence" value="ECO:0007669"/>
    <property type="project" value="UniProtKB-UniRule"/>
</dbReference>
<dbReference type="GO" id="GO:0003924">
    <property type="term" value="F:GTPase activity"/>
    <property type="evidence" value="ECO:0007669"/>
    <property type="project" value="InterPro"/>
</dbReference>
<dbReference type="GO" id="GO:0097216">
    <property type="term" value="F:guanosine tetraphosphate binding"/>
    <property type="evidence" value="ECO:0007669"/>
    <property type="project" value="UniProtKB-ARBA"/>
</dbReference>
<dbReference type="GO" id="GO:0003746">
    <property type="term" value="F:translation elongation factor activity"/>
    <property type="evidence" value="ECO:0007669"/>
    <property type="project" value="UniProtKB-UniRule"/>
</dbReference>
<dbReference type="CDD" id="cd01884">
    <property type="entry name" value="EF_Tu"/>
    <property type="match status" value="1"/>
</dbReference>
<dbReference type="CDD" id="cd03697">
    <property type="entry name" value="EFTU_II"/>
    <property type="match status" value="1"/>
</dbReference>
<dbReference type="CDD" id="cd03707">
    <property type="entry name" value="EFTU_III"/>
    <property type="match status" value="1"/>
</dbReference>
<dbReference type="FunFam" id="2.40.30.10:FF:000001">
    <property type="entry name" value="Elongation factor Tu"/>
    <property type="match status" value="1"/>
</dbReference>
<dbReference type="FunFam" id="3.40.50.300:FF:000003">
    <property type="entry name" value="Elongation factor Tu"/>
    <property type="match status" value="1"/>
</dbReference>
<dbReference type="Gene3D" id="3.40.50.300">
    <property type="entry name" value="P-loop containing nucleotide triphosphate hydrolases"/>
    <property type="match status" value="1"/>
</dbReference>
<dbReference type="Gene3D" id="2.40.30.10">
    <property type="entry name" value="Translation factors"/>
    <property type="match status" value="2"/>
</dbReference>
<dbReference type="HAMAP" id="MF_00118_B">
    <property type="entry name" value="EF_Tu_B"/>
    <property type="match status" value="1"/>
</dbReference>
<dbReference type="InterPro" id="IPR041709">
    <property type="entry name" value="EF-Tu_GTP-bd"/>
</dbReference>
<dbReference type="InterPro" id="IPR050055">
    <property type="entry name" value="EF-Tu_GTPase"/>
</dbReference>
<dbReference type="InterPro" id="IPR004161">
    <property type="entry name" value="EFTu-like_2"/>
</dbReference>
<dbReference type="InterPro" id="IPR033720">
    <property type="entry name" value="EFTU_2"/>
</dbReference>
<dbReference type="InterPro" id="IPR031157">
    <property type="entry name" value="G_TR_CS"/>
</dbReference>
<dbReference type="InterPro" id="IPR027417">
    <property type="entry name" value="P-loop_NTPase"/>
</dbReference>
<dbReference type="InterPro" id="IPR005225">
    <property type="entry name" value="Small_GTP-bd"/>
</dbReference>
<dbReference type="InterPro" id="IPR000795">
    <property type="entry name" value="T_Tr_GTP-bd_dom"/>
</dbReference>
<dbReference type="InterPro" id="IPR009000">
    <property type="entry name" value="Transl_B-barrel_sf"/>
</dbReference>
<dbReference type="InterPro" id="IPR009001">
    <property type="entry name" value="Transl_elong_EF1A/Init_IF2_C"/>
</dbReference>
<dbReference type="InterPro" id="IPR004541">
    <property type="entry name" value="Transl_elong_EFTu/EF1A_bac/org"/>
</dbReference>
<dbReference type="InterPro" id="IPR004160">
    <property type="entry name" value="Transl_elong_EFTu/EF1A_C"/>
</dbReference>
<dbReference type="NCBIfam" id="TIGR00485">
    <property type="entry name" value="EF-Tu"/>
    <property type="match status" value="1"/>
</dbReference>
<dbReference type="NCBIfam" id="NF000766">
    <property type="entry name" value="PRK00049.1"/>
    <property type="match status" value="1"/>
</dbReference>
<dbReference type="NCBIfam" id="NF009372">
    <property type="entry name" value="PRK12735.1"/>
    <property type="match status" value="1"/>
</dbReference>
<dbReference type="NCBIfam" id="NF009373">
    <property type="entry name" value="PRK12736.1"/>
    <property type="match status" value="1"/>
</dbReference>
<dbReference type="NCBIfam" id="TIGR00231">
    <property type="entry name" value="small_GTP"/>
    <property type="match status" value="1"/>
</dbReference>
<dbReference type="PANTHER" id="PTHR43721:SF22">
    <property type="entry name" value="ELONGATION FACTOR TU, MITOCHONDRIAL"/>
    <property type="match status" value="1"/>
</dbReference>
<dbReference type="PANTHER" id="PTHR43721">
    <property type="entry name" value="ELONGATION FACTOR TU-RELATED"/>
    <property type="match status" value="1"/>
</dbReference>
<dbReference type="Pfam" id="PF00009">
    <property type="entry name" value="GTP_EFTU"/>
    <property type="match status" value="1"/>
</dbReference>
<dbReference type="Pfam" id="PF03144">
    <property type="entry name" value="GTP_EFTU_D2"/>
    <property type="match status" value="1"/>
</dbReference>
<dbReference type="Pfam" id="PF03143">
    <property type="entry name" value="GTP_EFTU_D3"/>
    <property type="match status" value="1"/>
</dbReference>
<dbReference type="PRINTS" id="PR00315">
    <property type="entry name" value="ELONGATNFCT"/>
</dbReference>
<dbReference type="SUPFAM" id="SSF50465">
    <property type="entry name" value="EF-Tu/eEF-1alpha/eIF2-gamma C-terminal domain"/>
    <property type="match status" value="1"/>
</dbReference>
<dbReference type="SUPFAM" id="SSF52540">
    <property type="entry name" value="P-loop containing nucleoside triphosphate hydrolases"/>
    <property type="match status" value="1"/>
</dbReference>
<dbReference type="SUPFAM" id="SSF50447">
    <property type="entry name" value="Translation proteins"/>
    <property type="match status" value="1"/>
</dbReference>
<dbReference type="PROSITE" id="PS00301">
    <property type="entry name" value="G_TR_1"/>
    <property type="match status" value="1"/>
</dbReference>
<dbReference type="PROSITE" id="PS51722">
    <property type="entry name" value="G_TR_2"/>
    <property type="match status" value="1"/>
</dbReference>
<reference key="1">
    <citation type="journal article" date="2006" name="Mol. Microbiol.">
        <title>Role of pathogenicity island-associated integrases in the genome plasticity of uropathogenic Escherichia coli strain 536.</title>
        <authorList>
            <person name="Hochhut B."/>
            <person name="Wilde C."/>
            <person name="Balling G."/>
            <person name="Middendorf B."/>
            <person name="Dobrindt U."/>
            <person name="Brzuszkiewicz E."/>
            <person name="Gottschalk G."/>
            <person name="Carniel E."/>
            <person name="Hacker J."/>
        </authorList>
    </citation>
    <scope>NUCLEOTIDE SEQUENCE [LARGE SCALE GENOMIC DNA]</scope>
    <source>
        <strain>536 / UPEC</strain>
    </source>
</reference>
<protein>
    <recommendedName>
        <fullName evidence="2">Elongation factor Tu 2</fullName>
        <shortName evidence="2">EF-Tu 2</shortName>
        <ecNumber evidence="2">3.6.5.3</ecNumber>
    </recommendedName>
</protein>
<feature type="chain" id="PRO_0000337391" description="Elongation factor Tu 2">
    <location>
        <begin position="1"/>
        <end position="394"/>
    </location>
</feature>
<feature type="domain" description="tr-type G">
    <location>
        <begin position="10"/>
        <end position="204"/>
    </location>
</feature>
<feature type="region of interest" description="G1" evidence="1">
    <location>
        <begin position="19"/>
        <end position="26"/>
    </location>
</feature>
<feature type="region of interest" description="G2" evidence="1">
    <location>
        <begin position="60"/>
        <end position="64"/>
    </location>
</feature>
<feature type="region of interest" description="G3" evidence="1">
    <location>
        <begin position="81"/>
        <end position="84"/>
    </location>
</feature>
<feature type="region of interest" description="G4" evidence="1">
    <location>
        <begin position="136"/>
        <end position="139"/>
    </location>
</feature>
<feature type="region of interest" description="G5" evidence="1">
    <location>
        <begin position="174"/>
        <end position="176"/>
    </location>
</feature>
<feature type="binding site" evidence="2">
    <location>
        <begin position="19"/>
        <end position="26"/>
    </location>
    <ligand>
        <name>GTP</name>
        <dbReference type="ChEBI" id="CHEBI:37565"/>
    </ligand>
</feature>
<feature type="binding site" evidence="2">
    <location>
        <position position="26"/>
    </location>
    <ligand>
        <name>Mg(2+)</name>
        <dbReference type="ChEBI" id="CHEBI:18420"/>
    </ligand>
</feature>
<feature type="binding site" evidence="2">
    <location>
        <begin position="81"/>
        <end position="85"/>
    </location>
    <ligand>
        <name>GTP</name>
        <dbReference type="ChEBI" id="CHEBI:37565"/>
    </ligand>
</feature>
<feature type="binding site" evidence="2">
    <location>
        <begin position="136"/>
        <end position="139"/>
    </location>
    <ligand>
        <name>GTP</name>
        <dbReference type="ChEBI" id="CHEBI:37565"/>
    </ligand>
</feature>
<accession>Q0TA85</accession>
<name>EFTU2_ECOL5</name>
<gene>
    <name evidence="2" type="primary">tuf2</name>
    <name type="ordered locus">ECP_4193</name>
</gene>
<evidence type="ECO:0000250" key="1"/>
<evidence type="ECO:0000255" key="2">
    <source>
        <dbReference type="HAMAP-Rule" id="MF_00118"/>
    </source>
</evidence>
<sequence length="394" mass="43314">MSKEKFERTKPHVNVGTIGHVDHGKTTLTAAITTVLAKTYGGAARAFDQIDNAPEEKARGITINTSHVEYDTPTRHYAHVDCPGHADYVKNMITGAAQMDGAILVVAATDGPMPQTREHILLGRQVGVPYIIVFLNKCDMVDDEELLELVEMEVRELLSQYDFPGDDTPIVRGSALKALEGDAEWEAKILELAGFLDSYIPEPERAIDKPFLLPIEDVFSISGRGTVVTGRVERGIIKVGEEVEIVGIKETQKSTCTGVEMFRKLLDEGRAGENVGVLLRGIKREEIERGQVLAKPGTIKPHTKFESEVYILSKDEGGRHTPFFKGYRPQFYFRTTDVTGTIELPEGVEMVMPGDNIKMVVTLIHPIAMDDGLRFAIREGGRTVGAGVVAKVLS</sequence>
<proteinExistence type="inferred from homology"/>